<organism>
    <name type="scientific">Tolumonas auensis (strain DSM 9187 / NBRC 110442 / TA 4)</name>
    <dbReference type="NCBI Taxonomy" id="595494"/>
    <lineage>
        <taxon>Bacteria</taxon>
        <taxon>Pseudomonadati</taxon>
        <taxon>Pseudomonadota</taxon>
        <taxon>Gammaproteobacteria</taxon>
        <taxon>Aeromonadales</taxon>
        <taxon>Aeromonadaceae</taxon>
        <taxon>Tolumonas</taxon>
    </lineage>
</organism>
<feature type="chain" id="PRO_1000213086" description="NADPH-dependent 7-cyano-7-deazaguanine reductase">
    <location>
        <begin position="1"/>
        <end position="283"/>
    </location>
</feature>
<feature type="active site" description="Thioimide intermediate" evidence="1">
    <location>
        <position position="191"/>
    </location>
</feature>
<feature type="active site" description="Proton donor" evidence="1">
    <location>
        <position position="198"/>
    </location>
</feature>
<feature type="binding site" evidence="1">
    <location>
        <begin position="90"/>
        <end position="92"/>
    </location>
    <ligand>
        <name>substrate</name>
    </ligand>
</feature>
<feature type="binding site" evidence="1">
    <location>
        <begin position="92"/>
        <end position="93"/>
    </location>
    <ligand>
        <name>NADPH</name>
        <dbReference type="ChEBI" id="CHEBI:57783"/>
    </ligand>
</feature>
<feature type="binding site" evidence="1">
    <location>
        <begin position="230"/>
        <end position="231"/>
    </location>
    <ligand>
        <name>substrate</name>
    </ligand>
</feature>
<feature type="binding site" evidence="1">
    <location>
        <begin position="259"/>
        <end position="260"/>
    </location>
    <ligand>
        <name>NADPH</name>
        <dbReference type="ChEBI" id="CHEBI:57783"/>
    </ligand>
</feature>
<dbReference type="EC" id="1.7.1.13" evidence="1"/>
<dbReference type="EMBL" id="CP001616">
    <property type="protein sequence ID" value="ACQ92122.1"/>
    <property type="molecule type" value="Genomic_DNA"/>
</dbReference>
<dbReference type="RefSeq" id="WP_012728721.1">
    <property type="nucleotide sequence ID" value="NC_012691.1"/>
</dbReference>
<dbReference type="SMR" id="C4L9Z3"/>
<dbReference type="STRING" id="595494.Tola_0493"/>
<dbReference type="KEGG" id="tau:Tola_0493"/>
<dbReference type="eggNOG" id="COG0780">
    <property type="taxonomic scope" value="Bacteria"/>
</dbReference>
<dbReference type="eggNOG" id="COG2904">
    <property type="taxonomic scope" value="Bacteria"/>
</dbReference>
<dbReference type="HOGENOM" id="CLU_054738_0_0_6"/>
<dbReference type="OrthoDB" id="9789995at2"/>
<dbReference type="UniPathway" id="UPA00392"/>
<dbReference type="Proteomes" id="UP000009073">
    <property type="component" value="Chromosome"/>
</dbReference>
<dbReference type="GO" id="GO:0005737">
    <property type="term" value="C:cytoplasm"/>
    <property type="evidence" value="ECO:0007669"/>
    <property type="project" value="UniProtKB-SubCell"/>
</dbReference>
<dbReference type="GO" id="GO:0033739">
    <property type="term" value="F:preQ1 synthase activity"/>
    <property type="evidence" value="ECO:0007669"/>
    <property type="project" value="UniProtKB-UniRule"/>
</dbReference>
<dbReference type="GO" id="GO:0008616">
    <property type="term" value="P:queuosine biosynthetic process"/>
    <property type="evidence" value="ECO:0007669"/>
    <property type="project" value="UniProtKB-UniRule"/>
</dbReference>
<dbReference type="GO" id="GO:0006400">
    <property type="term" value="P:tRNA modification"/>
    <property type="evidence" value="ECO:0007669"/>
    <property type="project" value="UniProtKB-UniRule"/>
</dbReference>
<dbReference type="Gene3D" id="3.30.1130.10">
    <property type="match status" value="2"/>
</dbReference>
<dbReference type="HAMAP" id="MF_00817">
    <property type="entry name" value="QueF_type2"/>
    <property type="match status" value="1"/>
</dbReference>
<dbReference type="InterPro" id="IPR043133">
    <property type="entry name" value="GTP-CH-I_C/QueF"/>
</dbReference>
<dbReference type="InterPro" id="IPR050084">
    <property type="entry name" value="NADPH_dep_7-cyano-7-deazaG_red"/>
</dbReference>
<dbReference type="InterPro" id="IPR029500">
    <property type="entry name" value="QueF"/>
</dbReference>
<dbReference type="InterPro" id="IPR029139">
    <property type="entry name" value="QueF_N"/>
</dbReference>
<dbReference type="InterPro" id="IPR016428">
    <property type="entry name" value="QueF_type2"/>
</dbReference>
<dbReference type="NCBIfam" id="TIGR03138">
    <property type="entry name" value="QueF"/>
    <property type="match status" value="1"/>
</dbReference>
<dbReference type="PANTHER" id="PTHR34354">
    <property type="entry name" value="NADPH-DEPENDENT 7-CYANO-7-DEAZAGUANINE REDUCTASE"/>
    <property type="match status" value="1"/>
</dbReference>
<dbReference type="PANTHER" id="PTHR34354:SF1">
    <property type="entry name" value="NADPH-DEPENDENT 7-CYANO-7-DEAZAGUANINE REDUCTASE"/>
    <property type="match status" value="1"/>
</dbReference>
<dbReference type="Pfam" id="PF14489">
    <property type="entry name" value="QueF"/>
    <property type="match status" value="1"/>
</dbReference>
<dbReference type="Pfam" id="PF14819">
    <property type="entry name" value="QueF_N"/>
    <property type="match status" value="1"/>
</dbReference>
<dbReference type="PIRSF" id="PIRSF004750">
    <property type="entry name" value="Nitrile_oxidored_YqcD_prd"/>
    <property type="match status" value="1"/>
</dbReference>
<dbReference type="SUPFAM" id="SSF55620">
    <property type="entry name" value="Tetrahydrobiopterin biosynthesis enzymes-like"/>
    <property type="match status" value="1"/>
</dbReference>
<accession>C4L9Z3</accession>
<comment type="function">
    <text evidence="1">Catalyzes the NADPH-dependent reduction of 7-cyano-7-deazaguanine (preQ0) to 7-aminomethyl-7-deazaguanine (preQ1).</text>
</comment>
<comment type="catalytic activity">
    <reaction evidence="1">
        <text>7-aminomethyl-7-carbaguanine + 2 NADP(+) = 7-cyano-7-deazaguanine + 2 NADPH + 3 H(+)</text>
        <dbReference type="Rhea" id="RHEA:13409"/>
        <dbReference type="ChEBI" id="CHEBI:15378"/>
        <dbReference type="ChEBI" id="CHEBI:45075"/>
        <dbReference type="ChEBI" id="CHEBI:57783"/>
        <dbReference type="ChEBI" id="CHEBI:58349"/>
        <dbReference type="ChEBI" id="CHEBI:58703"/>
        <dbReference type="EC" id="1.7.1.13"/>
    </reaction>
</comment>
<comment type="pathway">
    <text evidence="1">tRNA modification; tRNA-queuosine biosynthesis.</text>
</comment>
<comment type="subunit">
    <text evidence="1">Homodimer.</text>
</comment>
<comment type="subcellular location">
    <subcellularLocation>
        <location evidence="1">Cytoplasm</location>
    </subcellularLocation>
</comment>
<comment type="similarity">
    <text evidence="1">Belongs to the GTP cyclohydrolase I family. QueF type 2 subfamily.</text>
</comment>
<proteinExistence type="inferred from homology"/>
<gene>
    <name evidence="1" type="primary">queF</name>
    <name type="ordered locus">Tola_0493</name>
</gene>
<evidence type="ECO:0000255" key="1">
    <source>
        <dbReference type="HAMAP-Rule" id="MF_00817"/>
    </source>
</evidence>
<protein>
    <recommendedName>
        <fullName evidence="1">NADPH-dependent 7-cyano-7-deazaguanine reductase</fullName>
        <ecNumber evidence="1">1.7.1.13</ecNumber>
    </recommendedName>
    <alternativeName>
        <fullName evidence="1">7-cyano-7-carbaguanine reductase</fullName>
    </alternativeName>
    <alternativeName>
        <fullName evidence="1">NADPH-dependent nitrile oxidoreductase</fullName>
    </alternativeName>
    <alternativeName>
        <fullName evidence="1">PreQ(0) reductase</fullName>
    </alternativeName>
</protein>
<reference key="1">
    <citation type="submission" date="2009-05" db="EMBL/GenBank/DDBJ databases">
        <title>Complete sequence of Tolumonas auensis DSM 9187.</title>
        <authorList>
            <consortium name="US DOE Joint Genome Institute"/>
            <person name="Lucas S."/>
            <person name="Copeland A."/>
            <person name="Lapidus A."/>
            <person name="Glavina del Rio T."/>
            <person name="Tice H."/>
            <person name="Bruce D."/>
            <person name="Goodwin L."/>
            <person name="Pitluck S."/>
            <person name="Chertkov O."/>
            <person name="Brettin T."/>
            <person name="Detter J.C."/>
            <person name="Han C."/>
            <person name="Larimer F."/>
            <person name="Land M."/>
            <person name="Hauser L."/>
            <person name="Kyrpides N."/>
            <person name="Mikhailova N."/>
            <person name="Spring S."/>
            <person name="Beller H."/>
        </authorList>
    </citation>
    <scope>NUCLEOTIDE SEQUENCE [LARGE SCALE GENOMIC DNA]</scope>
    <source>
        <strain>DSM 9187 / NBRC 110442 / TA 4</strain>
    </source>
</reference>
<keyword id="KW-0963">Cytoplasm</keyword>
<keyword id="KW-0521">NADP</keyword>
<keyword id="KW-0560">Oxidoreductase</keyword>
<keyword id="KW-0671">Queuosine biosynthesis</keyword>
<keyword id="KW-1185">Reference proteome</keyword>
<name>QUEF_TOLAT</name>
<sequence>MSHASPYENNPLLANLTLGQKTDYIAEYSPQLLQPVPRQLNRDALNLAGNLPFHGEDLWTLYEISWLNNKGKPVVAIGEARIDAGSINLIESKSFKLYLNSFNQTRFADLATVRHTLEQDLSKCAEGAIKVALYPLSEAAHHIGTFPGECIDDLDIVIDEYHFSSDWLEQAGDNHTIVEETLHSHLLKSNCLVTGQPDWGSVVIHYKGPRINREKMLRYLISFRQHNEFHEQCVERIFVDLQRHCQPEKLTVYARYTRRGGLDINPFRSNWETAPANMRLIRQ</sequence>